<accession>Q9NPF5</accession>
<accession>A8K001</accession>
<accession>D3DPY8</accession>
<accession>Q0JSM4</accession>
<accession>Q5TG41</accession>
<accession>Q7Z3H7</accession>
<accession>Q9H0S8</accession>
<accession>Q9P2C2</accession>
<sequence length="467" mass="52993">MATGADVRDILELGGPEGDAASGTISKKDIINPDKKKSKKSSETLTFKRPEGMHREVYALLYSDKKDAPPLLPSDTGQGYRTVKAKLGSKKVRPWKWMPFTNPARKDGAMFFHWRRAAEEGKDYPFARFNKTVQVPVYSEQEYQLYLHDDAWTKAETDHLFDLSRRFDLRFVVIHDRYDHQQFKKRSVEDLKERYYHICAKLANVRAVPGTDLKIPVFDAGHERRRKEQLERLYNRTPEQVAEEEYLLQELRKIEARKKEREKRSQDLQKLITAADTTAEQRRTERKAPKKKLPQKKEAEKPAVPETAGIKFPDFKSAGVTLRSQRMKLPSSVGQKKIKALEQMLLELGVELSPTPTEELVHMFNELRSDLVLLYELKQACANCEYELQMLRHRHEALARAGVLGGPATPASGPGPASAEPAVTEPGLGPDPKDTIIDVVGAPLTPNSRKRRESASSSSSVKKAKKP</sequence>
<proteinExistence type="evidence at protein level"/>
<name>DMAP1_HUMAN</name>
<protein>
    <recommendedName>
        <fullName>DNA methyltransferase 1-associated protein 1</fullName>
        <shortName>DNMAP1</shortName>
        <shortName>DNMT1-associated protein 1</shortName>
    </recommendedName>
</protein>
<feature type="chain" id="PRO_0000079935" description="DNA methyltransferase 1-associated protein 1">
    <location>
        <begin position="1"/>
        <end position="467"/>
    </location>
</feature>
<feature type="domain" description="SANT">
    <location>
        <begin position="149"/>
        <end position="199"/>
    </location>
</feature>
<feature type="region of interest" description="Disordered" evidence="2">
    <location>
        <begin position="1"/>
        <end position="48"/>
    </location>
</feature>
<feature type="region of interest" description="Disordered" evidence="2">
    <location>
        <begin position="258"/>
        <end position="305"/>
    </location>
</feature>
<feature type="region of interest" description="Disordered" evidence="2">
    <location>
        <begin position="404"/>
        <end position="467"/>
    </location>
</feature>
<feature type="coiled-coil region" evidence="1">
    <location>
        <begin position="225"/>
        <end position="275"/>
    </location>
</feature>
<feature type="compositionally biased region" description="Basic and acidic residues" evidence="2">
    <location>
        <begin position="1"/>
        <end position="11"/>
    </location>
</feature>
<feature type="compositionally biased region" description="Basic and acidic residues" evidence="2">
    <location>
        <begin position="26"/>
        <end position="48"/>
    </location>
</feature>
<feature type="compositionally biased region" description="Basic and acidic residues" evidence="2">
    <location>
        <begin position="258"/>
        <end position="267"/>
    </location>
</feature>
<feature type="compositionally biased region" description="Low complexity" evidence="2">
    <location>
        <begin position="406"/>
        <end position="422"/>
    </location>
</feature>
<feature type="modified residue" description="Phosphothreonine" evidence="10 11 12 13 14 15 16 17">
    <location>
        <position position="445"/>
    </location>
</feature>
<feature type="modified residue" description="Phosphoserine" evidence="13">
    <location>
        <position position="448"/>
    </location>
</feature>
<feature type="cross-link" description="Glycyl lysine isopeptide (Lys-Gly) (interchain with G-Cter in SUMO2)" evidence="18">
    <location>
        <position position="27"/>
    </location>
</feature>
<feature type="cross-link" description="Glycyl lysine isopeptide (Lys-Gly) (interchain with G-Cter in SUMO2)" evidence="18">
    <location>
        <position position="214"/>
    </location>
</feature>
<feature type="sequence conflict" description="In Ref. 4; CAB66592/CAL38490." evidence="9" ref="4">
    <original>V</original>
    <variation>E</variation>
    <location>
        <position position="135"/>
    </location>
</feature>
<feature type="sequence conflict" description="In Ref. 4; CAB66592/CAL38490." evidence="9" ref="4">
    <original>D</original>
    <variation>N</variation>
    <location>
        <position position="150"/>
    </location>
</feature>
<feature type="sequence conflict" description="In Ref. 10; CAD97886." evidence="9" ref="10">
    <original>F</original>
    <variation>L</variation>
    <location>
        <position position="171"/>
    </location>
</feature>
<feature type="sequence conflict" description="In Ref. 4; CAB66592/CAL38490." evidence="9" ref="4">
    <original>T</original>
    <variation>S</variation>
    <location>
        <position position="424"/>
    </location>
</feature>
<feature type="strand" evidence="21">
    <location>
        <begin position="71"/>
        <end position="75"/>
    </location>
</feature>
<feature type="strand" evidence="21">
    <location>
        <begin position="80"/>
        <end position="82"/>
    </location>
</feature>
<feature type="helix" evidence="21">
    <location>
        <begin position="84"/>
        <end position="88"/>
    </location>
</feature>
<feature type="strand" evidence="21">
    <location>
        <begin position="96"/>
        <end position="100"/>
    </location>
</feature>
<feature type="helix" evidence="20">
    <location>
        <begin position="103"/>
        <end position="105"/>
    </location>
</feature>
<feature type="strand" evidence="20">
    <location>
        <begin position="106"/>
        <end position="108"/>
    </location>
</feature>
<feature type="strand" evidence="21">
    <location>
        <begin position="111"/>
        <end position="115"/>
    </location>
</feature>
<feature type="strand" evidence="21">
    <location>
        <begin position="117"/>
        <end position="119"/>
    </location>
</feature>
<feature type="helix" evidence="21">
    <location>
        <begin position="125"/>
        <end position="129"/>
    </location>
</feature>
<feature type="helix" evidence="19">
    <location>
        <begin position="140"/>
        <end position="146"/>
    </location>
</feature>
<feature type="strand" evidence="21">
    <location>
        <begin position="150"/>
        <end position="152"/>
    </location>
</feature>
<feature type="helix" evidence="19">
    <location>
        <begin position="154"/>
        <end position="166"/>
    </location>
</feature>
<feature type="turn" evidence="19">
    <location>
        <begin position="167"/>
        <end position="169"/>
    </location>
</feature>
<feature type="helix" evidence="19">
    <location>
        <begin position="171"/>
        <end position="177"/>
    </location>
</feature>
<feature type="turn" evidence="19">
    <location>
        <begin position="180"/>
        <end position="182"/>
    </location>
</feature>
<feature type="helix" evidence="19">
    <location>
        <begin position="188"/>
        <end position="205"/>
    </location>
</feature>
<feature type="helix" evidence="21">
    <location>
        <begin position="220"/>
        <end position="235"/>
    </location>
</feature>
<feature type="helix" evidence="21">
    <location>
        <begin position="238"/>
        <end position="250"/>
    </location>
</feature>
<dbReference type="EMBL" id="AF265228">
    <property type="protein sequence ID" value="AAF87079.1"/>
    <property type="molecule type" value="mRNA"/>
</dbReference>
<dbReference type="EMBL" id="AL137200">
    <property type="protein sequence ID" value="CAB69910.1"/>
    <property type="molecule type" value="mRNA"/>
</dbReference>
<dbReference type="EMBL" id="AB037846">
    <property type="protein sequence ID" value="BAA92663.1"/>
    <property type="status" value="ALT_INIT"/>
    <property type="molecule type" value="mRNA"/>
</dbReference>
<dbReference type="EMBL" id="AL136657">
    <property type="protein sequence ID" value="CAB66592.1"/>
    <property type="molecule type" value="mRNA"/>
</dbReference>
<dbReference type="EMBL" id="AM393614">
    <property type="protein sequence ID" value="CAL38490.1"/>
    <property type="molecule type" value="mRNA"/>
</dbReference>
<dbReference type="EMBL" id="AK021605">
    <property type="protein sequence ID" value="BAB13854.1"/>
    <property type="molecule type" value="mRNA"/>
</dbReference>
<dbReference type="EMBL" id="AK289366">
    <property type="protein sequence ID" value="BAF82055.1"/>
    <property type="molecule type" value="mRNA"/>
</dbReference>
<dbReference type="EMBL" id="AL035417">
    <property type="status" value="NOT_ANNOTATED_CDS"/>
    <property type="molecule type" value="Genomic_DNA"/>
</dbReference>
<dbReference type="EMBL" id="CH471059">
    <property type="protein sequence ID" value="EAX07046.1"/>
    <property type="molecule type" value="Genomic_DNA"/>
</dbReference>
<dbReference type="EMBL" id="CH471059">
    <property type="protein sequence ID" value="EAX07047.1"/>
    <property type="molecule type" value="Genomic_DNA"/>
</dbReference>
<dbReference type="EMBL" id="CH471059">
    <property type="protein sequence ID" value="EAX07048.1"/>
    <property type="molecule type" value="Genomic_DNA"/>
</dbReference>
<dbReference type="EMBL" id="CH471059">
    <property type="protein sequence ID" value="EAX07051.1"/>
    <property type="molecule type" value="Genomic_DNA"/>
</dbReference>
<dbReference type="EMBL" id="BC002855">
    <property type="protein sequence ID" value="AAH02855.1"/>
    <property type="molecule type" value="mRNA"/>
</dbReference>
<dbReference type="EMBL" id="BC008053">
    <property type="protein sequence ID" value="AAH08053.1"/>
    <property type="molecule type" value="mRNA"/>
</dbReference>
<dbReference type="EMBL" id="BX537895">
    <property type="protein sequence ID" value="CAD97886.1"/>
    <property type="molecule type" value="mRNA"/>
</dbReference>
<dbReference type="CCDS" id="CCDS509.1"/>
<dbReference type="RefSeq" id="NP_001029195.1">
    <property type="nucleotide sequence ID" value="NM_001034023.2"/>
</dbReference>
<dbReference type="RefSeq" id="NP_001029196.1">
    <property type="nucleotide sequence ID" value="NM_001034024.2"/>
</dbReference>
<dbReference type="RefSeq" id="NP_061973.1">
    <property type="nucleotide sequence ID" value="NM_019100.5"/>
</dbReference>
<dbReference type="RefSeq" id="XP_016857297.1">
    <property type="nucleotide sequence ID" value="XM_017001808.1"/>
</dbReference>
<dbReference type="PDB" id="3HM5">
    <property type="method" value="X-ray"/>
    <property type="resolution" value="1.80 A"/>
    <property type="chains" value="A=121-212"/>
</dbReference>
<dbReference type="PDB" id="4IEJ">
    <property type="method" value="X-ray"/>
    <property type="resolution" value="1.45 A"/>
    <property type="chains" value="A=121-212"/>
</dbReference>
<dbReference type="PDB" id="8QR1">
    <property type="method" value="EM"/>
    <property type="resolution" value="2.40 A"/>
    <property type="chains" value="F=1-467"/>
</dbReference>
<dbReference type="PDB" id="8X15">
    <property type="method" value="EM"/>
    <property type="resolution" value="3.20 A"/>
    <property type="chains" value="V=1-467"/>
</dbReference>
<dbReference type="PDB" id="8X19">
    <property type="method" value="EM"/>
    <property type="resolution" value="3.20 A"/>
    <property type="chains" value="V=1-467"/>
</dbReference>
<dbReference type="PDB" id="8X1C">
    <property type="method" value="EM"/>
    <property type="resolution" value="3.20 A"/>
    <property type="chains" value="V=1-467"/>
</dbReference>
<dbReference type="PDB" id="8XVG">
    <property type="method" value="EM"/>
    <property type="resolution" value="9.40 A"/>
    <property type="chains" value="G=1-467"/>
</dbReference>
<dbReference type="PDB" id="8XVT">
    <property type="method" value="EM"/>
    <property type="resolution" value="3.20 A"/>
    <property type="chains" value="G=1-467"/>
</dbReference>
<dbReference type="PDB" id="9C57">
    <property type="method" value="EM"/>
    <property type="resolution" value="2.75 A"/>
    <property type="chains" value="I=1-467"/>
</dbReference>
<dbReference type="PDB" id="9C62">
    <property type="method" value="EM"/>
    <property type="resolution" value="5.28 A"/>
    <property type="chains" value="I=1-467"/>
</dbReference>
<dbReference type="PDB" id="9C6N">
    <property type="method" value="EM"/>
    <property type="resolution" value="3.29 A"/>
    <property type="chains" value="I=1-467"/>
</dbReference>
<dbReference type="PDBsum" id="3HM5"/>
<dbReference type="PDBsum" id="4IEJ"/>
<dbReference type="PDBsum" id="8QR1"/>
<dbReference type="PDBsum" id="8X15"/>
<dbReference type="PDBsum" id="8X19"/>
<dbReference type="PDBsum" id="8X1C"/>
<dbReference type="PDBsum" id="8XVG"/>
<dbReference type="PDBsum" id="8XVT"/>
<dbReference type="PDBsum" id="9C57"/>
<dbReference type="PDBsum" id="9C62"/>
<dbReference type="PDBsum" id="9C6N"/>
<dbReference type="EMDB" id="EMD-18581"/>
<dbReference type="EMDB" id="EMD-18591"/>
<dbReference type="EMDB" id="EMD-18597"/>
<dbReference type="EMDB" id="EMD-18598"/>
<dbReference type="EMDB" id="EMD-18611"/>
<dbReference type="EMDB" id="EMD-18794"/>
<dbReference type="EMDB" id="EMD-37984"/>
<dbReference type="EMDB" id="EMD-37988"/>
<dbReference type="EMDB" id="EMD-37990"/>
<dbReference type="EMDB" id="EMD-38703"/>
<dbReference type="EMDB" id="EMD-38718"/>
<dbReference type="EMDB" id="EMD-45206"/>
<dbReference type="EMDB" id="EMD-45240"/>
<dbReference type="EMDB" id="EMD-45252"/>
<dbReference type="SMR" id="Q9NPF5"/>
<dbReference type="BioGRID" id="121004">
    <property type="interactions" value="203"/>
</dbReference>
<dbReference type="ComplexPortal" id="CPX-974">
    <property type="entry name" value="SRCAP chromatin remodeling complex"/>
</dbReference>
<dbReference type="ComplexPortal" id="CPX-978">
    <property type="entry name" value="NuA4 histone acetyltransferase complex"/>
</dbReference>
<dbReference type="CORUM" id="Q9NPF5"/>
<dbReference type="FunCoup" id="Q9NPF5">
    <property type="interactions" value="3850"/>
</dbReference>
<dbReference type="IntAct" id="Q9NPF5">
    <property type="interactions" value="131"/>
</dbReference>
<dbReference type="MINT" id="Q9NPF5"/>
<dbReference type="STRING" id="9606.ENSP00000361363"/>
<dbReference type="GlyGen" id="Q9NPF5">
    <property type="glycosylation" value="4 sites, 1 N-linked glycan (1 site), 1 O-linked glycan (3 sites)"/>
</dbReference>
<dbReference type="iPTMnet" id="Q9NPF5"/>
<dbReference type="PhosphoSitePlus" id="Q9NPF5"/>
<dbReference type="BioMuta" id="DMAP1"/>
<dbReference type="DMDM" id="20138031"/>
<dbReference type="jPOST" id="Q9NPF5"/>
<dbReference type="MassIVE" id="Q9NPF5"/>
<dbReference type="PaxDb" id="9606-ENSP00000361363"/>
<dbReference type="PeptideAtlas" id="Q9NPF5"/>
<dbReference type="ProteomicsDB" id="81985"/>
<dbReference type="Pumba" id="Q9NPF5"/>
<dbReference type="Antibodypedia" id="18433">
    <property type="antibodies" value="290 antibodies from 35 providers"/>
</dbReference>
<dbReference type="DNASU" id="55929"/>
<dbReference type="Ensembl" id="ENST00000315913.9">
    <property type="protein sequence ID" value="ENSP00000312697.5"/>
    <property type="gene ID" value="ENSG00000178028.14"/>
</dbReference>
<dbReference type="Ensembl" id="ENST00000361745.10">
    <property type="protein sequence ID" value="ENSP00000354697.6"/>
    <property type="gene ID" value="ENSG00000178028.14"/>
</dbReference>
<dbReference type="Ensembl" id="ENST00000372289.7">
    <property type="protein sequence ID" value="ENSP00000361363.2"/>
    <property type="gene ID" value="ENSG00000178028.14"/>
</dbReference>
<dbReference type="GeneID" id="55929"/>
<dbReference type="KEGG" id="hsa:55929"/>
<dbReference type="MANE-Select" id="ENST00000372289.7">
    <property type="protein sequence ID" value="ENSP00000361363.2"/>
    <property type="RefSeq nucleotide sequence ID" value="NM_019100.5"/>
    <property type="RefSeq protein sequence ID" value="NP_061973.1"/>
</dbReference>
<dbReference type="UCSC" id="uc001clq.2">
    <property type="organism name" value="human"/>
</dbReference>
<dbReference type="AGR" id="HGNC:18291"/>
<dbReference type="CTD" id="55929"/>
<dbReference type="DisGeNET" id="55929"/>
<dbReference type="GeneCards" id="DMAP1"/>
<dbReference type="HGNC" id="HGNC:18291">
    <property type="gene designation" value="DMAP1"/>
</dbReference>
<dbReference type="HPA" id="ENSG00000178028">
    <property type="expression patterns" value="Low tissue specificity"/>
</dbReference>
<dbReference type="MIM" id="605077">
    <property type="type" value="gene"/>
</dbReference>
<dbReference type="neXtProt" id="NX_Q9NPF5"/>
<dbReference type="OpenTargets" id="ENSG00000178028"/>
<dbReference type="PharmGKB" id="PA134927315"/>
<dbReference type="VEuPathDB" id="HostDB:ENSG00000178028"/>
<dbReference type="eggNOG" id="KOG2656">
    <property type="taxonomic scope" value="Eukaryota"/>
</dbReference>
<dbReference type="GeneTree" id="ENSGT00390000016466"/>
<dbReference type="HOGENOM" id="CLU_018539_1_1_1"/>
<dbReference type="InParanoid" id="Q9NPF5"/>
<dbReference type="OMA" id="RNNIQNW"/>
<dbReference type="OrthoDB" id="19740at2759"/>
<dbReference type="PAN-GO" id="Q9NPF5">
    <property type="GO annotations" value="7 GO annotations based on evolutionary models"/>
</dbReference>
<dbReference type="PhylomeDB" id="Q9NPF5"/>
<dbReference type="TreeFam" id="TF354261"/>
<dbReference type="PathwayCommons" id="Q9NPF5"/>
<dbReference type="Reactome" id="R-HSA-3214847">
    <property type="pathway name" value="HATs acetylate histones"/>
</dbReference>
<dbReference type="SignaLink" id="Q9NPF5"/>
<dbReference type="SIGNOR" id="Q9NPF5"/>
<dbReference type="BioGRID-ORCS" id="55929">
    <property type="hits" value="783 hits in 1184 CRISPR screens"/>
</dbReference>
<dbReference type="ChiTaRS" id="DMAP1">
    <property type="organism name" value="human"/>
</dbReference>
<dbReference type="EvolutionaryTrace" id="Q9NPF5"/>
<dbReference type="GeneWiki" id="DMAP1"/>
<dbReference type="GenomeRNAi" id="55929"/>
<dbReference type="Pharos" id="Q9NPF5">
    <property type="development level" value="Tbio"/>
</dbReference>
<dbReference type="PRO" id="PR:Q9NPF5"/>
<dbReference type="Proteomes" id="UP000005640">
    <property type="component" value="Chromosome 1"/>
</dbReference>
<dbReference type="RNAct" id="Q9NPF5">
    <property type="molecule type" value="protein"/>
</dbReference>
<dbReference type="Bgee" id="ENSG00000178028">
    <property type="expression patterns" value="Expressed in right adrenal gland cortex and 145 other cell types or tissues"/>
</dbReference>
<dbReference type="ExpressionAtlas" id="Q9NPF5">
    <property type="expression patterns" value="baseline and differential"/>
</dbReference>
<dbReference type="GO" id="GO:0005737">
    <property type="term" value="C:cytoplasm"/>
    <property type="evidence" value="ECO:0000314"/>
    <property type="project" value="UniProtKB"/>
</dbReference>
<dbReference type="GO" id="GO:0005829">
    <property type="term" value="C:cytosol"/>
    <property type="evidence" value="ECO:0000314"/>
    <property type="project" value="HPA"/>
</dbReference>
<dbReference type="GO" id="GO:0035267">
    <property type="term" value="C:NuA4 histone acetyltransferase complex"/>
    <property type="evidence" value="ECO:0000314"/>
    <property type="project" value="UniProtKB"/>
</dbReference>
<dbReference type="GO" id="GO:0005654">
    <property type="term" value="C:nucleoplasm"/>
    <property type="evidence" value="ECO:0000314"/>
    <property type="project" value="HPA"/>
</dbReference>
<dbReference type="GO" id="GO:0000786">
    <property type="term" value="C:nucleosome"/>
    <property type="evidence" value="ECO:0000314"/>
    <property type="project" value="ComplexPortal"/>
</dbReference>
<dbReference type="GO" id="GO:0005634">
    <property type="term" value="C:nucleus"/>
    <property type="evidence" value="ECO:0000314"/>
    <property type="project" value="UniProtKB"/>
</dbReference>
<dbReference type="GO" id="GO:0005657">
    <property type="term" value="C:replication fork"/>
    <property type="evidence" value="ECO:0007669"/>
    <property type="project" value="Ensembl"/>
</dbReference>
<dbReference type="GO" id="GO:0000812">
    <property type="term" value="C:Swr1 complex"/>
    <property type="evidence" value="ECO:0000318"/>
    <property type="project" value="GO_Central"/>
</dbReference>
<dbReference type="GO" id="GO:0061629">
    <property type="term" value="F:RNA polymerase II-specific DNA-binding transcription factor binding"/>
    <property type="evidence" value="ECO:0000314"/>
    <property type="project" value="UniProtKB"/>
</dbReference>
<dbReference type="GO" id="GO:0003714">
    <property type="term" value="F:transcription corepressor activity"/>
    <property type="evidence" value="ECO:0000318"/>
    <property type="project" value="GO_Central"/>
</dbReference>
<dbReference type="GO" id="GO:0006338">
    <property type="term" value="P:chromatin remodeling"/>
    <property type="evidence" value="ECO:0000303"/>
    <property type="project" value="ComplexPortal"/>
</dbReference>
<dbReference type="GO" id="GO:0006281">
    <property type="term" value="P:DNA repair"/>
    <property type="evidence" value="ECO:0007669"/>
    <property type="project" value="InterPro"/>
</dbReference>
<dbReference type="GO" id="GO:0045892">
    <property type="term" value="P:negative regulation of DNA-templated transcription"/>
    <property type="evidence" value="ECO:0000303"/>
    <property type="project" value="UniProtKB"/>
</dbReference>
<dbReference type="GO" id="GO:0000122">
    <property type="term" value="P:negative regulation of transcription by RNA polymerase II"/>
    <property type="evidence" value="ECO:0000314"/>
    <property type="project" value="UniProtKB"/>
</dbReference>
<dbReference type="GO" id="GO:0045893">
    <property type="term" value="P:positive regulation of DNA-templated transcription"/>
    <property type="evidence" value="ECO:0000303"/>
    <property type="project" value="ComplexPortal"/>
</dbReference>
<dbReference type="GO" id="GO:1905168">
    <property type="term" value="P:positive regulation of double-strand break repair via homologous recombination"/>
    <property type="evidence" value="ECO:0000314"/>
    <property type="project" value="ComplexPortal"/>
</dbReference>
<dbReference type="GO" id="GO:0042307">
    <property type="term" value="P:positive regulation of protein import into nucleus"/>
    <property type="evidence" value="ECO:0000314"/>
    <property type="project" value="UniProtKB"/>
</dbReference>
<dbReference type="GO" id="GO:0042981">
    <property type="term" value="P:regulation of apoptotic process"/>
    <property type="evidence" value="ECO:0000303"/>
    <property type="project" value="ComplexPortal"/>
</dbReference>
<dbReference type="GO" id="GO:0051726">
    <property type="term" value="P:regulation of cell cycle"/>
    <property type="evidence" value="ECO:0000315"/>
    <property type="project" value="ComplexPortal"/>
</dbReference>
<dbReference type="GO" id="GO:0006355">
    <property type="term" value="P:regulation of DNA-templated transcription"/>
    <property type="evidence" value="ECO:0000303"/>
    <property type="project" value="ComplexPortal"/>
</dbReference>
<dbReference type="GO" id="GO:2000779">
    <property type="term" value="P:regulation of double-strand break repair"/>
    <property type="evidence" value="ECO:0000303"/>
    <property type="project" value="ComplexPortal"/>
</dbReference>
<dbReference type="GO" id="GO:0045471">
    <property type="term" value="P:response to ethanol"/>
    <property type="evidence" value="ECO:0007669"/>
    <property type="project" value="Ensembl"/>
</dbReference>
<dbReference type="CDD" id="cd11658">
    <property type="entry name" value="SANT_DMAP1_like"/>
    <property type="match status" value="1"/>
</dbReference>
<dbReference type="FunFam" id="1.10.10.60:FF:000087">
    <property type="entry name" value="DNA methyltransferase 1-associated protein 1"/>
    <property type="match status" value="1"/>
</dbReference>
<dbReference type="Gene3D" id="1.10.10.60">
    <property type="entry name" value="Homeodomain-like"/>
    <property type="match status" value="1"/>
</dbReference>
<dbReference type="InterPro" id="IPR032563">
    <property type="entry name" value="DAMP1_SANT-like"/>
</dbReference>
<dbReference type="InterPro" id="IPR008468">
    <property type="entry name" value="DMAP1"/>
</dbReference>
<dbReference type="InterPro" id="IPR027109">
    <property type="entry name" value="Swc4/Dmap1"/>
</dbReference>
<dbReference type="PANTHER" id="PTHR12855:SF10">
    <property type="entry name" value="DNA METHYLTRANSFERASE 1-ASSOCIATED PROTEIN 1"/>
    <property type="match status" value="1"/>
</dbReference>
<dbReference type="PANTHER" id="PTHR12855">
    <property type="entry name" value="DNA METHYLTRANSFERASE 1-ASSOCIATED PROTEIN 1 FAMILY MEMBER"/>
    <property type="match status" value="1"/>
</dbReference>
<dbReference type="Pfam" id="PF05499">
    <property type="entry name" value="DMAP1"/>
    <property type="match status" value="1"/>
</dbReference>
<dbReference type="Pfam" id="PF16282">
    <property type="entry name" value="SANT_DAMP1_like"/>
    <property type="match status" value="1"/>
</dbReference>
<reference key="1">
    <citation type="journal article" date="2000" name="Nat. Genet.">
        <title>DNMT1 binds HDAC2 and a new co-repressor, DMAP1, to form a complex at replication foci.</title>
        <authorList>
            <person name="Rountree M.R."/>
            <person name="Bachman K.E."/>
            <person name="Baylin S.B."/>
        </authorList>
    </citation>
    <scope>NUCLEOTIDE SEQUENCE [MRNA]</scope>
    <scope>SUBCELLULAR LOCATION</scope>
    <scope>INTERACTION WITH DNMT1 AND TSG101</scope>
</reference>
<reference key="2">
    <citation type="submission" date="2000-01" db="EMBL/GenBank/DDBJ databases">
        <authorList>
            <person name="Rhodes S."/>
            <person name="Huckle E."/>
        </authorList>
    </citation>
    <scope>NUCLEOTIDE SEQUENCE [LARGE SCALE MRNA]</scope>
</reference>
<reference key="3">
    <citation type="journal article" date="2000" name="DNA Res.">
        <title>Prediction of the coding sequences of unidentified human genes. XVI. The complete sequences of 150 new cDNA clones from brain which code for large proteins in vitro.</title>
        <authorList>
            <person name="Nagase T."/>
            <person name="Kikuno R."/>
            <person name="Ishikawa K."/>
            <person name="Hirosawa M."/>
            <person name="Ohara O."/>
        </authorList>
    </citation>
    <scope>NUCLEOTIDE SEQUENCE [LARGE SCALE MRNA]</scope>
    <source>
        <tissue>Brain</tissue>
    </source>
</reference>
<reference key="4">
    <citation type="journal article" date="2001" name="Genome Res.">
        <title>Towards a catalog of human genes and proteins: sequencing and analysis of 500 novel complete protein coding human cDNAs.</title>
        <authorList>
            <person name="Wiemann S."/>
            <person name="Weil B."/>
            <person name="Wellenreuther R."/>
            <person name="Gassenhuber J."/>
            <person name="Glassl S."/>
            <person name="Ansorge W."/>
            <person name="Boecher M."/>
            <person name="Bloecker H."/>
            <person name="Bauersachs S."/>
            <person name="Blum H."/>
            <person name="Lauber J."/>
            <person name="Duesterhoeft A."/>
            <person name="Beyer A."/>
            <person name="Koehrer K."/>
            <person name="Strack N."/>
            <person name="Mewes H.-W."/>
            <person name="Ottenwaelder B."/>
            <person name="Obermaier B."/>
            <person name="Tampe J."/>
            <person name="Heubner D."/>
            <person name="Wambutt R."/>
            <person name="Korn B."/>
            <person name="Klein M."/>
            <person name="Poustka A."/>
        </authorList>
    </citation>
    <scope>NUCLEOTIDE SEQUENCE [LARGE SCALE MRNA]</scope>
    <source>
        <tissue>Fetal brain</tissue>
    </source>
</reference>
<reference key="5">
    <citation type="journal article" date="2004" name="Nat. Genet.">
        <title>Complete sequencing and characterization of 21,243 full-length human cDNAs.</title>
        <authorList>
            <person name="Ota T."/>
            <person name="Suzuki Y."/>
            <person name="Nishikawa T."/>
            <person name="Otsuki T."/>
            <person name="Sugiyama T."/>
            <person name="Irie R."/>
            <person name="Wakamatsu A."/>
            <person name="Hayashi K."/>
            <person name="Sato H."/>
            <person name="Nagai K."/>
            <person name="Kimura K."/>
            <person name="Makita H."/>
            <person name="Sekine M."/>
            <person name="Obayashi M."/>
            <person name="Nishi T."/>
            <person name="Shibahara T."/>
            <person name="Tanaka T."/>
            <person name="Ishii S."/>
            <person name="Yamamoto J."/>
            <person name="Saito K."/>
            <person name="Kawai Y."/>
            <person name="Isono Y."/>
            <person name="Nakamura Y."/>
            <person name="Nagahari K."/>
            <person name="Murakami K."/>
            <person name="Yasuda T."/>
            <person name="Iwayanagi T."/>
            <person name="Wagatsuma M."/>
            <person name="Shiratori A."/>
            <person name="Sudo H."/>
            <person name="Hosoiri T."/>
            <person name="Kaku Y."/>
            <person name="Kodaira H."/>
            <person name="Kondo H."/>
            <person name="Sugawara M."/>
            <person name="Takahashi M."/>
            <person name="Kanda K."/>
            <person name="Yokoi T."/>
            <person name="Furuya T."/>
            <person name="Kikkawa E."/>
            <person name="Omura Y."/>
            <person name="Abe K."/>
            <person name="Kamihara K."/>
            <person name="Katsuta N."/>
            <person name="Sato K."/>
            <person name="Tanikawa M."/>
            <person name="Yamazaki M."/>
            <person name="Ninomiya K."/>
            <person name="Ishibashi T."/>
            <person name="Yamashita H."/>
            <person name="Murakawa K."/>
            <person name="Fujimori K."/>
            <person name="Tanai H."/>
            <person name="Kimata M."/>
            <person name="Watanabe M."/>
            <person name="Hiraoka S."/>
            <person name="Chiba Y."/>
            <person name="Ishida S."/>
            <person name="Ono Y."/>
            <person name="Takiguchi S."/>
            <person name="Watanabe S."/>
            <person name="Yosida M."/>
            <person name="Hotuta T."/>
            <person name="Kusano J."/>
            <person name="Kanehori K."/>
            <person name="Takahashi-Fujii A."/>
            <person name="Hara H."/>
            <person name="Tanase T.-O."/>
            <person name="Nomura Y."/>
            <person name="Togiya S."/>
            <person name="Komai F."/>
            <person name="Hara R."/>
            <person name="Takeuchi K."/>
            <person name="Arita M."/>
            <person name="Imose N."/>
            <person name="Musashino K."/>
            <person name="Yuuki H."/>
            <person name="Oshima A."/>
            <person name="Sasaki N."/>
            <person name="Aotsuka S."/>
            <person name="Yoshikawa Y."/>
            <person name="Matsunawa H."/>
            <person name="Ichihara T."/>
            <person name="Shiohata N."/>
            <person name="Sano S."/>
            <person name="Moriya S."/>
            <person name="Momiyama H."/>
            <person name="Satoh N."/>
            <person name="Takami S."/>
            <person name="Terashima Y."/>
            <person name="Suzuki O."/>
            <person name="Nakagawa S."/>
            <person name="Senoh A."/>
            <person name="Mizoguchi H."/>
            <person name="Goto Y."/>
            <person name="Shimizu F."/>
            <person name="Wakebe H."/>
            <person name="Hishigaki H."/>
            <person name="Watanabe T."/>
            <person name="Sugiyama A."/>
            <person name="Takemoto M."/>
            <person name="Kawakami B."/>
            <person name="Yamazaki M."/>
            <person name="Watanabe K."/>
            <person name="Kumagai A."/>
            <person name="Itakura S."/>
            <person name="Fukuzumi Y."/>
            <person name="Fujimori Y."/>
            <person name="Komiyama M."/>
            <person name="Tashiro H."/>
            <person name="Tanigami A."/>
            <person name="Fujiwara T."/>
            <person name="Ono T."/>
            <person name="Yamada K."/>
            <person name="Fujii Y."/>
            <person name="Ozaki K."/>
            <person name="Hirao M."/>
            <person name="Ohmori Y."/>
            <person name="Kawabata A."/>
            <person name="Hikiji T."/>
            <person name="Kobatake N."/>
            <person name="Inagaki H."/>
            <person name="Ikema Y."/>
            <person name="Okamoto S."/>
            <person name="Okitani R."/>
            <person name="Kawakami T."/>
            <person name="Noguchi S."/>
            <person name="Itoh T."/>
            <person name="Shigeta K."/>
            <person name="Senba T."/>
            <person name="Matsumura K."/>
            <person name="Nakajima Y."/>
            <person name="Mizuno T."/>
            <person name="Morinaga M."/>
            <person name="Sasaki M."/>
            <person name="Togashi T."/>
            <person name="Oyama M."/>
            <person name="Hata H."/>
            <person name="Watanabe M."/>
            <person name="Komatsu T."/>
            <person name="Mizushima-Sugano J."/>
            <person name="Satoh T."/>
            <person name="Shirai Y."/>
            <person name="Takahashi Y."/>
            <person name="Nakagawa K."/>
            <person name="Okumura K."/>
            <person name="Nagase T."/>
            <person name="Nomura N."/>
            <person name="Kikuchi H."/>
            <person name="Masuho Y."/>
            <person name="Yamashita R."/>
            <person name="Nakai K."/>
            <person name="Yada T."/>
            <person name="Nakamura Y."/>
            <person name="Ohara O."/>
            <person name="Isogai T."/>
            <person name="Sugano S."/>
        </authorList>
    </citation>
    <scope>NUCLEOTIDE SEQUENCE [LARGE SCALE MRNA]</scope>
    <source>
        <tissue>Embryo</tissue>
    </source>
</reference>
<reference key="6">
    <citation type="journal article" date="2006" name="Nature">
        <title>The DNA sequence and biological annotation of human chromosome 1.</title>
        <authorList>
            <person name="Gregory S.G."/>
            <person name="Barlow K.F."/>
            <person name="McLay K.E."/>
            <person name="Kaul R."/>
            <person name="Swarbreck D."/>
            <person name="Dunham A."/>
            <person name="Scott C.E."/>
            <person name="Howe K.L."/>
            <person name="Woodfine K."/>
            <person name="Spencer C.C.A."/>
            <person name="Jones M.C."/>
            <person name="Gillson C."/>
            <person name="Searle S."/>
            <person name="Zhou Y."/>
            <person name="Kokocinski F."/>
            <person name="McDonald L."/>
            <person name="Evans R."/>
            <person name="Phillips K."/>
            <person name="Atkinson A."/>
            <person name="Cooper R."/>
            <person name="Jones C."/>
            <person name="Hall R.E."/>
            <person name="Andrews T.D."/>
            <person name="Lloyd C."/>
            <person name="Ainscough R."/>
            <person name="Almeida J.P."/>
            <person name="Ambrose K.D."/>
            <person name="Anderson F."/>
            <person name="Andrew R.W."/>
            <person name="Ashwell R.I.S."/>
            <person name="Aubin K."/>
            <person name="Babbage A.K."/>
            <person name="Bagguley C.L."/>
            <person name="Bailey J."/>
            <person name="Beasley H."/>
            <person name="Bethel G."/>
            <person name="Bird C.P."/>
            <person name="Bray-Allen S."/>
            <person name="Brown J.Y."/>
            <person name="Brown A.J."/>
            <person name="Buckley D."/>
            <person name="Burton J."/>
            <person name="Bye J."/>
            <person name="Carder C."/>
            <person name="Chapman J.C."/>
            <person name="Clark S.Y."/>
            <person name="Clarke G."/>
            <person name="Clee C."/>
            <person name="Cobley V."/>
            <person name="Collier R.E."/>
            <person name="Corby N."/>
            <person name="Coville G.J."/>
            <person name="Davies J."/>
            <person name="Deadman R."/>
            <person name="Dunn M."/>
            <person name="Earthrowl M."/>
            <person name="Ellington A.G."/>
            <person name="Errington H."/>
            <person name="Frankish A."/>
            <person name="Frankland J."/>
            <person name="French L."/>
            <person name="Garner P."/>
            <person name="Garnett J."/>
            <person name="Gay L."/>
            <person name="Ghori M.R.J."/>
            <person name="Gibson R."/>
            <person name="Gilby L.M."/>
            <person name="Gillett W."/>
            <person name="Glithero R.J."/>
            <person name="Grafham D.V."/>
            <person name="Griffiths C."/>
            <person name="Griffiths-Jones S."/>
            <person name="Grocock R."/>
            <person name="Hammond S."/>
            <person name="Harrison E.S.I."/>
            <person name="Hart E."/>
            <person name="Haugen E."/>
            <person name="Heath P.D."/>
            <person name="Holmes S."/>
            <person name="Holt K."/>
            <person name="Howden P.J."/>
            <person name="Hunt A.R."/>
            <person name="Hunt S.E."/>
            <person name="Hunter G."/>
            <person name="Isherwood J."/>
            <person name="James R."/>
            <person name="Johnson C."/>
            <person name="Johnson D."/>
            <person name="Joy A."/>
            <person name="Kay M."/>
            <person name="Kershaw J.K."/>
            <person name="Kibukawa M."/>
            <person name="Kimberley A.M."/>
            <person name="King A."/>
            <person name="Knights A.J."/>
            <person name="Lad H."/>
            <person name="Laird G."/>
            <person name="Lawlor S."/>
            <person name="Leongamornlert D.A."/>
            <person name="Lloyd D.M."/>
            <person name="Loveland J."/>
            <person name="Lovell J."/>
            <person name="Lush M.J."/>
            <person name="Lyne R."/>
            <person name="Martin S."/>
            <person name="Mashreghi-Mohammadi M."/>
            <person name="Matthews L."/>
            <person name="Matthews N.S.W."/>
            <person name="McLaren S."/>
            <person name="Milne S."/>
            <person name="Mistry S."/>
            <person name="Moore M.J.F."/>
            <person name="Nickerson T."/>
            <person name="O'Dell C.N."/>
            <person name="Oliver K."/>
            <person name="Palmeiri A."/>
            <person name="Palmer S.A."/>
            <person name="Parker A."/>
            <person name="Patel D."/>
            <person name="Pearce A.V."/>
            <person name="Peck A.I."/>
            <person name="Pelan S."/>
            <person name="Phelps K."/>
            <person name="Phillimore B.J."/>
            <person name="Plumb R."/>
            <person name="Rajan J."/>
            <person name="Raymond C."/>
            <person name="Rouse G."/>
            <person name="Saenphimmachak C."/>
            <person name="Sehra H.K."/>
            <person name="Sheridan E."/>
            <person name="Shownkeen R."/>
            <person name="Sims S."/>
            <person name="Skuce C.D."/>
            <person name="Smith M."/>
            <person name="Steward C."/>
            <person name="Subramanian S."/>
            <person name="Sycamore N."/>
            <person name="Tracey A."/>
            <person name="Tromans A."/>
            <person name="Van Helmond Z."/>
            <person name="Wall M."/>
            <person name="Wallis J.M."/>
            <person name="White S."/>
            <person name="Whitehead S.L."/>
            <person name="Wilkinson J.E."/>
            <person name="Willey D.L."/>
            <person name="Williams H."/>
            <person name="Wilming L."/>
            <person name="Wray P.W."/>
            <person name="Wu Z."/>
            <person name="Coulson A."/>
            <person name="Vaudin M."/>
            <person name="Sulston J.E."/>
            <person name="Durbin R.M."/>
            <person name="Hubbard T."/>
            <person name="Wooster R."/>
            <person name="Dunham I."/>
            <person name="Carter N.P."/>
            <person name="McVean G."/>
            <person name="Ross M.T."/>
            <person name="Harrow J."/>
            <person name="Olson M.V."/>
            <person name="Beck S."/>
            <person name="Rogers J."/>
            <person name="Bentley D.R."/>
        </authorList>
    </citation>
    <scope>NUCLEOTIDE SEQUENCE [LARGE SCALE GENOMIC DNA]</scope>
</reference>
<reference key="7">
    <citation type="submission" date="2005-09" db="EMBL/GenBank/DDBJ databases">
        <authorList>
            <person name="Mural R.J."/>
            <person name="Istrail S."/>
            <person name="Sutton G.G."/>
            <person name="Florea L."/>
            <person name="Halpern A.L."/>
            <person name="Mobarry C.M."/>
            <person name="Lippert R."/>
            <person name="Walenz B."/>
            <person name="Shatkay H."/>
            <person name="Dew I."/>
            <person name="Miller J.R."/>
            <person name="Flanigan M.J."/>
            <person name="Edwards N.J."/>
            <person name="Bolanos R."/>
            <person name="Fasulo D."/>
            <person name="Halldorsson B.V."/>
            <person name="Hannenhalli S."/>
            <person name="Turner R."/>
            <person name="Yooseph S."/>
            <person name="Lu F."/>
            <person name="Nusskern D.R."/>
            <person name="Shue B.C."/>
            <person name="Zheng X.H."/>
            <person name="Zhong F."/>
            <person name="Delcher A.L."/>
            <person name="Huson D.H."/>
            <person name="Kravitz S.A."/>
            <person name="Mouchard L."/>
            <person name="Reinert K."/>
            <person name="Remington K.A."/>
            <person name="Clark A.G."/>
            <person name="Waterman M.S."/>
            <person name="Eichler E.E."/>
            <person name="Adams M.D."/>
            <person name="Hunkapiller M.W."/>
            <person name="Myers E.W."/>
            <person name="Venter J.C."/>
        </authorList>
    </citation>
    <scope>NUCLEOTIDE SEQUENCE [LARGE SCALE GENOMIC DNA]</scope>
</reference>
<reference key="8">
    <citation type="journal article" date="2004" name="Genome Res.">
        <title>The status, quality, and expansion of the NIH full-length cDNA project: the Mammalian Gene Collection (MGC).</title>
        <authorList>
            <consortium name="The MGC Project Team"/>
        </authorList>
    </citation>
    <scope>NUCLEOTIDE SEQUENCE [LARGE SCALE MRNA]</scope>
    <source>
        <tissue>Placenta</tissue>
        <tissue>Skin</tissue>
    </source>
</reference>
<reference key="9">
    <citation type="journal article" date="2003" name="J. Biol. Chem.">
        <title>Identification of new subunits of the multiprotein mammalian TRRAP/TIP60-containing histone acetyltransferase complex.</title>
        <authorList>
            <person name="Cai Y."/>
            <person name="Jin J."/>
            <person name="Tomomori-Sato C."/>
            <person name="Sato S."/>
            <person name="Sorokina I."/>
            <person name="Parmely T.J."/>
            <person name="Conaway R.C."/>
            <person name="Conaway J.W."/>
        </authorList>
    </citation>
    <scope>PROTEIN SEQUENCE OF 9-27; 56-66; 117-128; 237-252; 271-282; 369-378; 401-433 AND 434-449</scope>
    <scope>IDENTIFICATION IN NUA4 COMPLEX</scope>
    <scope>IDENTIFICATION BY MASS SPECTROMETRY</scope>
</reference>
<reference key="10">
    <citation type="journal article" date="2007" name="BMC Genomics">
        <title>The full-ORF clone resource of the German cDNA consortium.</title>
        <authorList>
            <person name="Bechtel S."/>
            <person name="Rosenfelder H."/>
            <person name="Duda A."/>
            <person name="Schmidt C.P."/>
            <person name="Ernst U."/>
            <person name="Wellenreuther R."/>
            <person name="Mehrle A."/>
            <person name="Schuster C."/>
            <person name="Bahr A."/>
            <person name="Bloecker H."/>
            <person name="Heubner D."/>
            <person name="Hoerlein A."/>
            <person name="Michel G."/>
            <person name="Wedler H."/>
            <person name="Koehrer K."/>
            <person name="Ottenwaelder B."/>
            <person name="Poustka A."/>
            <person name="Wiemann S."/>
            <person name="Schupp I."/>
        </authorList>
    </citation>
    <scope>NUCLEOTIDE SEQUENCE [LARGE SCALE MRNA] OF 132-467</scope>
    <source>
        <tissue>Colon endothelium</tissue>
    </source>
</reference>
<reference key="11">
    <citation type="journal article" date="2004" name="Curr. Opin. Genet. Dev.">
        <title>The highly conserved and multifunctional NuA4 HAT complex.</title>
        <authorList>
            <person name="Doyon Y."/>
            <person name="Cote J."/>
        </authorList>
    </citation>
    <scope>REVIEW ON NUA4 COMPLEX</scope>
</reference>
<reference key="12">
    <citation type="journal article" date="2004" name="J. Biol. Chem.">
        <title>Components of a pathway maintaining histone modification and heterochromatin protein 1 binding at the pericentric heterochromatin in mammalian cells.</title>
        <authorList>
            <person name="Xin H."/>
            <person name="Yoon H.-G."/>
            <person name="Singh P.B."/>
            <person name="Wong J."/>
            <person name="Qin J."/>
        </authorList>
    </citation>
    <scope>FUNCTION</scope>
    <scope>INTERACTION WITH ING1</scope>
</reference>
<reference key="13">
    <citation type="journal article" date="2004" name="J. Immunol.">
        <title>Physical and functional interactions between Daxx and DNA methyltransferase 1-associated protein, DMAP1.</title>
        <authorList>
            <person name="Muromoto R."/>
            <person name="Sugiyama K."/>
            <person name="Takachi A."/>
            <person name="Imoto S."/>
            <person name="Sato N."/>
            <person name="Yamamoto T."/>
            <person name="Oritani K."/>
            <person name="Shimoda K."/>
            <person name="Matsuda T."/>
        </authorList>
    </citation>
    <scope>FUNCTION</scope>
    <scope>INTERACTION WITH DAXX</scope>
</reference>
<reference key="14">
    <citation type="journal article" date="2004" name="Mol. Cell. Biol.">
        <title>Structural and functional conservation of the NuA4 histone acetyltransferase complex from yeast to humans.</title>
        <authorList>
            <person name="Doyon Y."/>
            <person name="Selleck W."/>
            <person name="Lane W.S."/>
            <person name="Tan S."/>
            <person name="Cote J."/>
        </authorList>
    </citation>
    <scope>FUNCTION</scope>
    <scope>IDENTIFICATION BY MASS SPECTROMETRY</scope>
    <scope>IDENTIFICATION IN NUA4 COMPLEX</scope>
    <scope>IDENTIFICATION IN NUA4-RELATED SRCAP-CONTAINING COMPLEX</scope>
</reference>
<reference key="15">
    <citation type="journal article" date="2004" name="Mol. Cell. Biol.">
        <title>Subcellular localization of RPB5-mediating protein and its putative functional partner.</title>
        <authorList>
            <person name="Delgermaa L."/>
            <person name="Hayashi N."/>
            <person name="Dorjsuren D."/>
            <person name="Nomura T."/>
            <person name="Thuy le T.T."/>
            <person name="Murakami S."/>
        </authorList>
    </citation>
    <scope>FUNCTION</scope>
    <scope>INTERACTION WITH URI1</scope>
    <scope>SUBCELLULAR LOCATION</scope>
</reference>
<reference key="16">
    <citation type="journal article" date="2006" name="Cell">
        <title>Global, in vivo, and site-specific phosphorylation dynamics in signaling networks.</title>
        <authorList>
            <person name="Olsen J.V."/>
            <person name="Blagoev B."/>
            <person name="Gnad F."/>
            <person name="Macek B."/>
            <person name="Kumar C."/>
            <person name="Mortensen P."/>
            <person name="Mann M."/>
        </authorList>
    </citation>
    <scope>PHOSPHORYLATION [LARGE SCALE ANALYSIS] AT THR-445</scope>
    <scope>IDENTIFICATION BY MASS SPECTROMETRY [LARGE SCALE ANALYSIS]</scope>
    <source>
        <tissue>Cervix carcinoma</tissue>
    </source>
</reference>
<reference key="17">
    <citation type="journal article" date="2006" name="Nat. Biotechnol.">
        <title>A probability-based approach for high-throughput protein phosphorylation analysis and site localization.</title>
        <authorList>
            <person name="Beausoleil S.A."/>
            <person name="Villen J."/>
            <person name="Gerber S.A."/>
            <person name="Rush J."/>
            <person name="Gygi S.P."/>
        </authorList>
    </citation>
    <scope>PHOSPHORYLATION [LARGE SCALE ANALYSIS] AT THR-445</scope>
    <scope>IDENTIFICATION BY MASS SPECTROMETRY [LARGE SCALE ANALYSIS]</scope>
    <source>
        <tissue>Cervix carcinoma</tissue>
    </source>
</reference>
<reference key="18">
    <citation type="journal article" date="2008" name="Mol. Cell">
        <title>Kinase-selective enrichment enables quantitative phosphoproteomics of the kinome across the cell cycle.</title>
        <authorList>
            <person name="Daub H."/>
            <person name="Olsen J.V."/>
            <person name="Bairlein M."/>
            <person name="Gnad F."/>
            <person name="Oppermann F.S."/>
            <person name="Korner R."/>
            <person name="Greff Z."/>
            <person name="Keri G."/>
            <person name="Stemmann O."/>
            <person name="Mann M."/>
        </authorList>
    </citation>
    <scope>PHOSPHORYLATION [LARGE SCALE ANALYSIS] AT THR-445</scope>
    <scope>IDENTIFICATION BY MASS SPECTROMETRY [LARGE SCALE ANALYSIS]</scope>
    <source>
        <tissue>Cervix carcinoma</tissue>
    </source>
</reference>
<reference key="19">
    <citation type="journal article" date="2008" name="Proc. Natl. Acad. Sci. U.S.A.">
        <title>A quantitative atlas of mitotic phosphorylation.</title>
        <authorList>
            <person name="Dephoure N."/>
            <person name="Zhou C."/>
            <person name="Villen J."/>
            <person name="Beausoleil S.A."/>
            <person name="Bakalarski C.E."/>
            <person name="Elledge S.J."/>
            <person name="Gygi S.P."/>
        </authorList>
    </citation>
    <scope>IDENTIFICATION BY MASS SPECTROMETRY [LARGE SCALE ANALYSIS]</scope>
    <source>
        <tissue>Cervix carcinoma</tissue>
    </source>
</reference>
<reference key="20">
    <citation type="journal article" date="2009" name="Sci. Signal.">
        <title>Quantitative phosphoproteomic analysis of T cell receptor signaling reveals system-wide modulation of protein-protein interactions.</title>
        <authorList>
            <person name="Mayya V."/>
            <person name="Lundgren D.H."/>
            <person name="Hwang S.-I."/>
            <person name="Rezaul K."/>
            <person name="Wu L."/>
            <person name="Eng J.K."/>
            <person name="Rodionov V."/>
            <person name="Han D.K."/>
        </authorList>
    </citation>
    <scope>PHOSPHORYLATION [LARGE SCALE ANALYSIS] AT THR-445 AND SER-448</scope>
    <scope>IDENTIFICATION BY MASS SPECTROMETRY [LARGE SCALE ANALYSIS]</scope>
    <source>
        <tissue>Leukemic T-cell</tissue>
    </source>
</reference>
<reference key="21">
    <citation type="journal article" date="2010" name="Sci. Signal.">
        <title>Quantitative phosphoproteomics reveals widespread full phosphorylation site occupancy during mitosis.</title>
        <authorList>
            <person name="Olsen J.V."/>
            <person name="Vermeulen M."/>
            <person name="Santamaria A."/>
            <person name="Kumar C."/>
            <person name="Miller M.L."/>
            <person name="Jensen L.J."/>
            <person name="Gnad F."/>
            <person name="Cox J."/>
            <person name="Jensen T.S."/>
            <person name="Nigg E.A."/>
            <person name="Brunak S."/>
            <person name="Mann M."/>
        </authorList>
    </citation>
    <scope>PHOSPHORYLATION [LARGE SCALE ANALYSIS] AT THR-445</scope>
    <scope>IDENTIFICATION BY MASS SPECTROMETRY [LARGE SCALE ANALYSIS]</scope>
    <source>
        <tissue>Cervix carcinoma</tissue>
    </source>
</reference>
<reference key="22">
    <citation type="journal article" date="2011" name="Sci. Signal.">
        <title>System-wide temporal characterization of the proteome and phosphoproteome of human embryonic stem cell differentiation.</title>
        <authorList>
            <person name="Rigbolt K.T."/>
            <person name="Prokhorova T.A."/>
            <person name="Akimov V."/>
            <person name="Henningsen J."/>
            <person name="Johansen P.T."/>
            <person name="Kratchmarova I."/>
            <person name="Kassem M."/>
            <person name="Mann M."/>
            <person name="Olsen J.V."/>
            <person name="Blagoev B."/>
        </authorList>
    </citation>
    <scope>PHOSPHORYLATION [LARGE SCALE ANALYSIS] AT THR-445</scope>
    <scope>IDENTIFICATION BY MASS SPECTROMETRY [LARGE SCALE ANALYSIS]</scope>
</reference>
<reference key="23">
    <citation type="journal article" date="2013" name="J. Proteome Res.">
        <title>Toward a comprehensive characterization of a human cancer cell phosphoproteome.</title>
        <authorList>
            <person name="Zhou H."/>
            <person name="Di Palma S."/>
            <person name="Preisinger C."/>
            <person name="Peng M."/>
            <person name="Polat A.N."/>
            <person name="Heck A.J."/>
            <person name="Mohammed S."/>
        </authorList>
    </citation>
    <scope>PHOSPHORYLATION [LARGE SCALE ANALYSIS] AT THR-445</scope>
    <scope>IDENTIFICATION BY MASS SPECTROMETRY [LARGE SCALE ANALYSIS]</scope>
    <source>
        <tissue>Cervix carcinoma</tissue>
        <tissue>Erythroleukemia</tissue>
    </source>
</reference>
<reference key="24">
    <citation type="journal article" date="2014" name="J. Proteomics">
        <title>An enzyme assisted RP-RPLC approach for in-depth analysis of human liver phosphoproteome.</title>
        <authorList>
            <person name="Bian Y."/>
            <person name="Song C."/>
            <person name="Cheng K."/>
            <person name="Dong M."/>
            <person name="Wang F."/>
            <person name="Huang J."/>
            <person name="Sun D."/>
            <person name="Wang L."/>
            <person name="Ye M."/>
            <person name="Zou H."/>
        </authorList>
    </citation>
    <scope>PHOSPHORYLATION [LARGE SCALE ANALYSIS] AT THR-445</scope>
    <scope>IDENTIFICATION BY MASS SPECTROMETRY [LARGE SCALE ANALYSIS]</scope>
    <source>
        <tissue>Liver</tissue>
    </source>
</reference>
<reference key="25">
    <citation type="journal article" date="2017" name="Nat. Struct. Mol. Biol.">
        <title>Site-specific mapping of the human SUMO proteome reveals co-modification with phosphorylation.</title>
        <authorList>
            <person name="Hendriks I.A."/>
            <person name="Lyon D."/>
            <person name="Young C."/>
            <person name="Jensen L.J."/>
            <person name="Vertegaal A.C."/>
            <person name="Nielsen M.L."/>
        </authorList>
    </citation>
    <scope>SUMOYLATION [LARGE SCALE ANALYSIS] AT LYS-27 AND LYS-214</scope>
    <scope>IDENTIFICATION BY MASS SPECTROMETRY [LARGE SCALE ANALYSIS]</scope>
</reference>
<reference key="26">
    <citation type="submission" date="2009-06" db="PDB data bank">
        <title>SANT domain of human DNA methyltransferase 1 associated protein 1.</title>
        <authorList>
            <consortium name="Structural genomics consortium (SGC)"/>
        </authorList>
    </citation>
    <scope>X-RAY CRYSTALLOGRAPHY (1.8 ANGSTROMS) OF 121-212</scope>
</reference>
<gene>
    <name type="primary">DMAP1</name>
    <name type="synonym">KIAA1425</name>
</gene>
<evidence type="ECO:0000255" key="1"/>
<evidence type="ECO:0000256" key="2">
    <source>
        <dbReference type="SAM" id="MobiDB-lite"/>
    </source>
</evidence>
<evidence type="ECO:0000269" key="3">
    <source>
    </source>
</evidence>
<evidence type="ECO:0000269" key="4">
    <source>
    </source>
</evidence>
<evidence type="ECO:0000269" key="5">
    <source>
    </source>
</evidence>
<evidence type="ECO:0000269" key="6">
    <source>
    </source>
</evidence>
<evidence type="ECO:0000269" key="7">
    <source>
    </source>
</evidence>
<evidence type="ECO:0000269" key="8">
    <source>
    </source>
</evidence>
<evidence type="ECO:0000305" key="9"/>
<evidence type="ECO:0007744" key="10">
    <source>
    </source>
</evidence>
<evidence type="ECO:0007744" key="11">
    <source>
    </source>
</evidence>
<evidence type="ECO:0007744" key="12">
    <source>
    </source>
</evidence>
<evidence type="ECO:0007744" key="13">
    <source>
    </source>
</evidence>
<evidence type="ECO:0007744" key="14">
    <source>
    </source>
</evidence>
<evidence type="ECO:0007744" key="15">
    <source>
    </source>
</evidence>
<evidence type="ECO:0007744" key="16">
    <source>
    </source>
</evidence>
<evidence type="ECO:0007744" key="17">
    <source>
    </source>
</evidence>
<evidence type="ECO:0007744" key="18">
    <source>
    </source>
</evidence>
<evidence type="ECO:0007829" key="19">
    <source>
        <dbReference type="PDB" id="4IEJ"/>
    </source>
</evidence>
<evidence type="ECO:0007829" key="20">
    <source>
        <dbReference type="PDB" id="8XVT"/>
    </source>
</evidence>
<evidence type="ECO:0007829" key="21">
    <source>
        <dbReference type="PDB" id="9C57"/>
    </source>
</evidence>
<comment type="function">
    <text evidence="5 6 7 8">Involved in transcription repression and activation. Its interaction with HDAC2 may provide a mechanism for histone deacetylation in heterochromatin following replication of DNA at late firing origins. Can also repress transcription independently of histone deacetylase activity. May specifically potentiate DAXX-mediated repression of glucocorticoid receptor-dependent transcription. Component of the NuA4 histone acetyltransferase (HAT) complex which is involved in transcriptional activation of select genes principally by acetylation of nucleosomal histones H4 and H2A. This modification may both alter nucleosome - DNA interactions and promote interaction of the modified histones with other proteins which positively regulate transcription. This complex may be required for the activation of transcriptional programs associated with oncogene and proto-oncogene mediated growth induction, tumor suppressor mediated growth arrest and replicative senescence, apoptosis, and DNA repair. NuA4 may also play a direct role in DNA repair when recruited to sites of DNA damage. Participates in the nuclear localization of URI1 and increases its transcriptional corepressor activity.</text>
</comment>
<comment type="subunit">
    <text evidence="3 4 5 6 7 8">Component of the NuA4 histone acetyltransferase complex which contains the catalytic subunit KAT5/TIP60 and the subunits EP400, TRRAP/PAF400, BRD8/SMAP, EPC1, DMAP1/DNMAP1, RUVBL1/TIP49, RUVBL2, ING3, actin, ACTL6A/BAF53A, MORF4L1/MRG15, MORF4L2/MRGX, MRGBP, YEATS4/GAS41, VPS72/YL1 and MEAF6. Component of a NuA4-related complex which contains EP400, TRRAP/PAF400, SRCAP, BRD8/SMAP, EPC1, DMAP1/DNMAP1, RUVBL1/TIP49, RUVBL2, actin, ACTL6A/BAF53A, VPS72 and YEATS4/GAS41. DMAP1 also forms a complex with DNMT1 and HDAC2. Throughout S phase it interacts directly with the N-terminus of DNMT1, which serves to recruit DMAP1 to replication foci. DMAP1 interacts with ING1, a component of the mSin3A transcription repressor complex, although this interaction is not required for recruitment of ING1 to heterochromatin. Interacts directly with the transcriptional corepressor TSG101. Interacts with the pro-apoptotic protein DAXX. Interacts with URI1.</text>
</comment>
<comment type="interaction">
    <interactant intactId="EBI-399105">
        <id>Q9NPF5</id>
    </interactant>
    <interactant intactId="EBI-638194">
        <id>P53365</id>
        <label>ARFIP2</label>
    </interactant>
    <organismsDiffer>false</organismsDiffer>
    <experiments>3</experiments>
</comment>
<comment type="interaction">
    <interactant intactId="EBI-399105">
        <id>Q9NPF5</id>
    </interactant>
    <interactant intactId="EBI-10229433">
        <id>Q13515</id>
        <label>BFSP2</label>
    </interactant>
    <organismsDiffer>false</organismsDiffer>
    <experiments>5</experiments>
</comment>
<comment type="interaction">
    <interactant intactId="EBI-399105">
        <id>Q9NPF5</id>
    </interactant>
    <interactant intactId="EBI-747505">
        <id>Q8TAB5</id>
        <label>C1orf216</label>
    </interactant>
    <organismsDiffer>false</organismsDiffer>
    <experiments>5</experiments>
</comment>
<comment type="interaction">
    <interactant intactId="EBI-399105">
        <id>Q9NPF5</id>
    </interactant>
    <interactant intactId="EBI-10175300">
        <id>Q8TD31-3</id>
        <label>CCHCR1</label>
    </interactant>
    <organismsDiffer>false</organismsDiffer>
    <experiments>3</experiments>
</comment>
<comment type="interaction">
    <interactant intactId="EBI-399105">
        <id>Q9NPF5</id>
    </interactant>
    <interactant intactId="EBI-5278764">
        <id>Q96GN5</id>
        <label>CDCA7L</label>
    </interactant>
    <organismsDiffer>false</organismsDiffer>
    <experiments>3</experiments>
</comment>
<comment type="interaction">
    <interactant intactId="EBI-399105">
        <id>Q9NPF5</id>
    </interactant>
    <interactant intactId="EBI-77321">
        <id>Q9UER7</id>
        <label>DAXX</label>
    </interactant>
    <organismsDiffer>false</organismsDiffer>
    <experiments>3</experiments>
</comment>
<comment type="interaction">
    <interactant intactId="EBI-399105">
        <id>Q9NPF5</id>
    </interactant>
    <interactant intactId="EBI-742102">
        <id>Q8IYI6</id>
        <label>EXOC8</label>
    </interactant>
    <organismsDiffer>false</organismsDiffer>
    <experiments>3</experiments>
</comment>
<comment type="interaction">
    <interactant intactId="EBI-399105">
        <id>Q9NPF5</id>
    </interactant>
    <interactant intactId="EBI-1052570">
        <id>O95995</id>
        <label>GAS8</label>
    </interactant>
    <organismsDiffer>false</organismsDiffer>
    <experiments>3</experiments>
</comment>
<comment type="interaction">
    <interactant intactId="EBI-399105">
        <id>Q9NPF5</id>
    </interactant>
    <interactant intactId="EBI-747500">
        <id>Q9BRT9</id>
        <label>GINS4</label>
    </interactant>
    <organismsDiffer>false</organismsDiffer>
    <experiments>3</experiments>
</comment>
<comment type="interaction">
    <interactant intactId="EBI-399105">
        <id>Q9NPF5</id>
    </interactant>
    <interactant intactId="EBI-7116203">
        <id>O75031</id>
        <label>HSF2BP</label>
    </interactant>
    <organismsDiffer>false</organismsDiffer>
    <experiments>3</experiments>
</comment>
<comment type="interaction">
    <interactant intactId="EBI-399105">
        <id>Q9NPF5</id>
    </interactant>
    <interactant intactId="EBI-2949715">
        <id>O95678</id>
        <label>KRT75</label>
    </interactant>
    <organismsDiffer>false</organismsDiffer>
    <experiments>3</experiments>
</comment>
<comment type="interaction">
    <interactant intactId="EBI-399105">
        <id>Q9NPF5</id>
    </interactant>
    <interactant intactId="EBI-968218">
        <id>P20700</id>
        <label>LMNB1</label>
    </interactant>
    <organismsDiffer>false</organismsDiffer>
    <experiments>3</experiments>
</comment>
<comment type="interaction">
    <interactant intactId="EBI-399105">
        <id>Q9NPF5</id>
    </interactant>
    <interactant intactId="EBI-720984">
        <id>Q6UWE0</id>
        <label>LRSAM1</label>
    </interactant>
    <organismsDiffer>false</organismsDiffer>
    <experiments>3</experiments>
</comment>
<comment type="interaction">
    <interactant intactId="EBI-399105">
        <id>Q9NPF5</id>
    </interactant>
    <interactant intactId="EBI-1104552">
        <id>Q9NYP9</id>
        <label>MIS18A</label>
    </interactant>
    <organismsDiffer>false</organismsDiffer>
    <experiments>3</experiments>
</comment>
<comment type="interaction">
    <interactant intactId="EBI-399105">
        <id>Q9NPF5</id>
    </interactant>
    <interactant intactId="EBI-10288852">
        <id>Q9UBU8-2</id>
        <label>MORF4L1</label>
    </interactant>
    <organismsDiffer>false</organismsDiffer>
    <experiments>4</experiments>
</comment>
<comment type="interaction">
    <interactant intactId="EBI-399105">
        <id>Q9NPF5</id>
    </interactant>
    <interactant intactId="EBI-3911716">
        <id>Q9ULW6</id>
        <label>NAP1L2</label>
    </interactant>
    <organismsDiffer>false</organismsDiffer>
    <experiments>3</experiments>
</comment>
<comment type="interaction">
    <interactant intactId="EBI-399105">
        <id>Q9NPF5</id>
    </interactant>
    <interactant intactId="EBI-356919">
        <id>O60925</id>
        <label>PFDN1</label>
    </interactant>
    <organismsDiffer>false</organismsDiffer>
    <experiments>3</experiments>
</comment>
<comment type="interaction">
    <interactant intactId="EBI-399105">
        <id>Q9NPF5</id>
    </interactant>
    <interactant intactId="EBI-14066006">
        <id>Q4G0R1</id>
        <label>PIBF1</label>
    </interactant>
    <organismsDiffer>false</organismsDiffer>
    <experiments>3</experiments>
</comment>
<comment type="interaction">
    <interactant intactId="EBI-399105">
        <id>Q9NPF5</id>
    </interactant>
    <interactant intactId="EBI-17181801">
        <id>P0C264</id>
        <label>SBK3</label>
    </interactant>
    <organismsDiffer>false</organismsDiffer>
    <experiments>3</experiments>
</comment>
<comment type="interaction">
    <interactant intactId="EBI-399105">
        <id>Q9NPF5</id>
    </interactant>
    <interactant intactId="EBI-3921347">
        <id>P51687</id>
        <label>SUOX</label>
    </interactant>
    <organismsDiffer>false</organismsDiffer>
    <experiments>3</experiments>
</comment>
<comment type="interaction">
    <interactant intactId="EBI-399105">
        <id>Q9NPF5</id>
    </interactant>
    <interactant intactId="EBI-11955057">
        <id>Q8N8B7-2</id>
        <label>TCEANC</label>
    </interactant>
    <organismsDiffer>false</organismsDiffer>
    <experiments>3</experiments>
</comment>
<comment type="interaction">
    <interactant intactId="EBI-399105">
        <id>Q9NPF5</id>
    </interactant>
    <interactant intactId="EBI-740781">
        <id>Q9BT92</id>
        <label>TCHP</label>
    </interactant>
    <organismsDiffer>false</organismsDiffer>
    <experiments>5</experiments>
</comment>
<comment type="interaction">
    <interactant intactId="EBI-399105">
        <id>Q9NPF5</id>
    </interactant>
    <interactant intactId="EBI-1047967">
        <id>Q86UE8</id>
        <label>TLK2</label>
    </interactant>
    <organismsDiffer>false</organismsDiffer>
    <experiments>3</experiments>
</comment>
<comment type="interaction">
    <interactant intactId="EBI-399105">
        <id>Q9NPF5</id>
    </interactant>
    <interactant intactId="EBI-81290">
        <id>P19474</id>
        <label>TRIM21</label>
    </interactant>
    <organismsDiffer>false</organismsDiffer>
    <experiments>3</experiments>
</comment>
<comment type="interaction">
    <interactant intactId="EBI-399105">
        <id>Q9NPF5</id>
    </interactant>
    <interactant intactId="EBI-10241197">
        <id>Q3SY00</id>
        <label>TSGA10IP</label>
    </interactant>
    <organismsDiffer>false</organismsDiffer>
    <experiments>3</experiments>
</comment>
<comment type="interaction">
    <interactant intactId="EBI-399105">
        <id>Q9NPF5</id>
    </interactant>
    <interactant intactId="EBI-359793">
        <id>P40222</id>
        <label>TXLNA</label>
    </interactant>
    <organismsDiffer>false</organismsDiffer>
    <experiments>3</experiments>
</comment>
<comment type="interaction">
    <interactant intactId="EBI-399105">
        <id>Q9NPF5</id>
    </interactant>
    <interactant intactId="EBI-6116822">
        <id>Q8N3L3</id>
        <label>TXLNB</label>
    </interactant>
    <organismsDiffer>false</organismsDiffer>
    <experiments>3</experiments>
</comment>
<comment type="subcellular location">
    <subcellularLocation>
        <location>Nucleus</location>
    </subcellularLocation>
    <subcellularLocation>
        <location>Cytoplasm</location>
    </subcellularLocation>
    <text>Targeted to replication foci throughout S phase by DNMT1.</text>
</comment>
<comment type="sequence caution" evidence="9">
    <conflict type="erroneous initiation">
        <sequence resource="EMBL-CDS" id="BAA92663"/>
    </conflict>
</comment>
<organism>
    <name type="scientific">Homo sapiens</name>
    <name type="common">Human</name>
    <dbReference type="NCBI Taxonomy" id="9606"/>
    <lineage>
        <taxon>Eukaryota</taxon>
        <taxon>Metazoa</taxon>
        <taxon>Chordata</taxon>
        <taxon>Craniata</taxon>
        <taxon>Vertebrata</taxon>
        <taxon>Euteleostomi</taxon>
        <taxon>Mammalia</taxon>
        <taxon>Eutheria</taxon>
        <taxon>Euarchontoglires</taxon>
        <taxon>Primates</taxon>
        <taxon>Haplorrhini</taxon>
        <taxon>Catarrhini</taxon>
        <taxon>Hominidae</taxon>
        <taxon>Homo</taxon>
    </lineage>
</organism>
<keyword id="KW-0002">3D-structure</keyword>
<keyword id="KW-0010">Activator</keyword>
<keyword id="KW-0156">Chromatin regulator</keyword>
<keyword id="KW-0175">Coiled coil</keyword>
<keyword id="KW-0963">Cytoplasm</keyword>
<keyword id="KW-0903">Direct protein sequencing</keyword>
<keyword id="KW-0341">Growth regulation</keyword>
<keyword id="KW-1017">Isopeptide bond</keyword>
<keyword id="KW-0539">Nucleus</keyword>
<keyword id="KW-0597">Phosphoprotein</keyword>
<keyword id="KW-1267">Proteomics identification</keyword>
<keyword id="KW-1185">Reference proteome</keyword>
<keyword id="KW-0678">Repressor</keyword>
<keyword id="KW-0804">Transcription</keyword>
<keyword id="KW-0805">Transcription regulation</keyword>
<keyword id="KW-0832">Ubl conjugation</keyword>